<protein>
    <recommendedName>
        <fullName>Amino-acid permease inda1</fullName>
    </recommendedName>
</protein>
<name>INDA1_HYPAT</name>
<dbReference type="EMBL" id="Z22594">
    <property type="protein sequence ID" value="CAA80308.1"/>
    <property type="molecule type" value="mRNA"/>
</dbReference>
<dbReference type="PIR" id="S33212">
    <property type="entry name" value="S33212"/>
</dbReference>
<dbReference type="SMR" id="P34054"/>
<dbReference type="GO" id="GO:0016020">
    <property type="term" value="C:membrane"/>
    <property type="evidence" value="ECO:0007669"/>
    <property type="project" value="UniProtKB-SubCell"/>
</dbReference>
<dbReference type="GO" id="GO:0015171">
    <property type="term" value="F:amino acid transmembrane transporter activity"/>
    <property type="evidence" value="ECO:0007669"/>
    <property type="project" value="TreeGrafter"/>
</dbReference>
<dbReference type="FunFam" id="1.20.1740.10:FF:000017">
    <property type="entry name" value="Amino acid permease"/>
    <property type="match status" value="1"/>
</dbReference>
<dbReference type="Gene3D" id="1.20.1740.10">
    <property type="entry name" value="Amino acid/polyamine transporter I"/>
    <property type="match status" value="1"/>
</dbReference>
<dbReference type="InterPro" id="IPR004841">
    <property type="entry name" value="AA-permease/SLC12A_dom"/>
</dbReference>
<dbReference type="InterPro" id="IPR004840">
    <property type="entry name" value="Amino_acid_permease_CS"/>
</dbReference>
<dbReference type="InterPro" id="IPR050524">
    <property type="entry name" value="APC_YAT"/>
</dbReference>
<dbReference type="PANTHER" id="PTHR43341">
    <property type="entry name" value="AMINO ACID PERMEASE"/>
    <property type="match status" value="1"/>
</dbReference>
<dbReference type="PANTHER" id="PTHR43341:SF12">
    <property type="entry name" value="AMINO ACID TRANSPORTER (EUROFUNG)"/>
    <property type="match status" value="1"/>
</dbReference>
<dbReference type="Pfam" id="PF00324">
    <property type="entry name" value="AA_permease"/>
    <property type="match status" value="1"/>
</dbReference>
<dbReference type="PIRSF" id="PIRSF006060">
    <property type="entry name" value="AA_transporter"/>
    <property type="match status" value="1"/>
</dbReference>
<dbReference type="PROSITE" id="PS00218">
    <property type="entry name" value="AMINO_ACID_PERMEASE_1"/>
    <property type="match status" value="1"/>
</dbReference>
<keyword id="KW-0029">Amino-acid transport</keyword>
<keyword id="KW-0472">Membrane</keyword>
<keyword id="KW-0812">Transmembrane</keyword>
<keyword id="KW-1133">Transmembrane helix</keyword>
<keyword id="KW-0813">Transport</keyword>
<proteinExistence type="evidence at transcript level"/>
<comment type="subcellular location">
    <subcellularLocation>
        <location>Membrane</location>
        <topology>Multi-pass membrane protein</topology>
    </subcellularLocation>
</comment>
<comment type="induction">
    <text>During mycoparasitism.</text>
</comment>
<comment type="similarity">
    <text evidence="2">Belongs to the amino acid-polyamine-organocation (APC) superfamily.</text>
</comment>
<gene>
    <name type="primary">inda1</name>
</gene>
<organism>
    <name type="scientific">Hypocrea atroviridis</name>
    <name type="common">Trichoderma atroviride</name>
    <dbReference type="NCBI Taxonomy" id="63577"/>
    <lineage>
        <taxon>Eukaryota</taxon>
        <taxon>Fungi</taxon>
        <taxon>Dikarya</taxon>
        <taxon>Ascomycota</taxon>
        <taxon>Pezizomycotina</taxon>
        <taxon>Sordariomycetes</taxon>
        <taxon>Hypocreomycetidae</taxon>
        <taxon>Hypocreales</taxon>
        <taxon>Hypocreaceae</taxon>
        <taxon>Trichoderma</taxon>
    </lineage>
</organism>
<sequence>MSKEESGHVTPEKGDNVVDYQASTTVLPSEGPERDANWFTRNGLNVDSFKKKHYGPGMVELERPMKARHLHMIAIGGSIGAGFFVGSGGALAKGGPGSLFVDFLIIGIMMFNVVYALGELAIMYPVSGSFYTYSARFIDPAWGFAMGWNYVLQWAAVLPLELTVCGITISYWNSEITTAAWISLFLGVIIIINLFGALGYAEEEFWASCFKLAATVIFMIIAFVLVLGGGPKDGRYHEYWGARYWYDPGAFKNGFKGFCSVFVTAAFSFSGTELVGLAAAESTNPTKNMPGAIKQVFWRITIFYILGLFFVGLLINSDDPALLSSAAYADSKASPFVLVGKYAGLKGFDHFMNLVILASVLSIGVSGVYGGSRTLTALAQQGYAPKLFTYIDKSGRPLPSVIFLILFGFIAYVSLDATGPVVFDWLLAISGLAALFTWGSVCLAHIRFRKAWKYHGHTLDEIPFKAAGGVYGSYLGLFICVIVLMAQFYTAIAAPPGSPGVGTAEDFFKQYLAAPVVLGFWIVGWLWKRQPFLRTKNIDVDTGLREFDWDEINAERTRIAPLPAWRRIIHHTF</sequence>
<feature type="chain" id="PRO_0000054183" description="Amino-acid permease inda1">
    <location>
        <begin position="1"/>
        <end position="573"/>
    </location>
</feature>
<feature type="transmembrane region" description="Helical" evidence="1">
    <location>
        <begin position="72"/>
        <end position="92"/>
    </location>
</feature>
<feature type="transmembrane region" description="Helical" evidence="1">
    <location>
        <begin position="99"/>
        <end position="117"/>
    </location>
</feature>
<feature type="transmembrane region" description="Helical" evidence="1">
    <location>
        <begin position="176"/>
        <end position="200"/>
    </location>
</feature>
<feature type="transmembrane region" description="Helical" evidence="1">
    <location>
        <begin position="212"/>
        <end position="229"/>
    </location>
</feature>
<feature type="transmembrane region" description="Helical" evidence="1">
    <location>
        <begin position="257"/>
        <end position="280"/>
    </location>
</feature>
<feature type="transmembrane region" description="Helical" evidence="1">
    <location>
        <begin position="296"/>
        <end position="315"/>
    </location>
</feature>
<feature type="transmembrane region" description="Helical" evidence="1">
    <location>
        <begin position="351"/>
        <end position="371"/>
    </location>
</feature>
<feature type="transmembrane region" description="Helical" evidence="1">
    <location>
        <begin position="398"/>
        <end position="415"/>
    </location>
</feature>
<feature type="transmembrane region" description="Helical" evidence="1">
    <location>
        <begin position="425"/>
        <end position="444"/>
    </location>
</feature>
<feature type="transmembrane region" description="Helical" evidence="1">
    <location>
        <begin position="470"/>
        <end position="494"/>
    </location>
</feature>
<feature type="transmembrane region" description="Helical" evidence="1">
    <location>
        <begin position="511"/>
        <end position="527"/>
    </location>
</feature>
<accession>P34054</accession>
<evidence type="ECO:0000255" key="1"/>
<evidence type="ECO:0000305" key="2"/>
<reference key="1">
    <citation type="journal article" date="1995" name="Microbiology">
        <title>Trichoderma harzianum genes induced during growth on Rhizoctonia solani cell walls.</title>
        <authorList>
            <person name="Vasseur V.V."/>
            <person name="van Montagu M.M."/>
            <person name="Goldman G.G.H."/>
        </authorList>
    </citation>
    <scope>NUCLEOTIDE SEQUENCE [MRNA]</scope>
    <source>
        <strain>IMI 206040</strain>
    </source>
</reference>